<evidence type="ECO:0000255" key="1">
    <source>
        <dbReference type="HAMAP-Rule" id="MF_04067"/>
    </source>
</evidence>
<comment type="function">
    <text evidence="1">Mediates the nuclear export of encapsidated genomic RNAs (ribonucleoproteins, RNPs). Acts as an adapter between viral RNPs complexes and the nuclear export machinery of the cell. Possesses no intrinsic RNA-binding activity, but includes a C-terminal M1-binding domain. This domain is believed to allow recognition of RNPs bound to the protein M1. Since protein M1 is not available in large quantities before late stages of infection, such an indirect recognition mechanism probably ensures that genomic RNPs are not exported from the host nucleus until sufficient quantities of viral mRNA and progeny genomic RNA have been synthesized. Furthermore, the RNPs enter the host cytoplasm only when associated with the M1 protein that is necessary to guide them to the plasma membrane. May down-regulate viral RNA synthesis when overproduced.</text>
</comment>
<comment type="subunit">
    <text evidence="1">Interacts with protein M1. May interact with host nucleoporin RAB/HRB and exportin XPO1/CRM1.</text>
</comment>
<comment type="subcellular location">
    <subcellularLocation>
        <location evidence="1">Virion</location>
    </subcellularLocation>
    <subcellularLocation>
        <location evidence="1">Host nucleus</location>
    </subcellularLocation>
</comment>
<comment type="alternative products">
    <event type="alternative splicing"/>
    <isoform>
        <id>Q89733-1</id>
        <name>NEP</name>
        <name>NS2</name>
        <sequence type="displayed"/>
    </isoform>
    <isoform>
        <id>Q82506-1</id>
        <name>NS1</name>
        <sequence type="external"/>
    </isoform>
</comment>
<comment type="miscellaneous">
    <text>Average number present in a viral particle is estimated to be 130-200 molecules.</text>
</comment>
<comment type="similarity">
    <text evidence="1">Belongs to the influenza viruses NEP family.</text>
</comment>
<proteinExistence type="evidence at protein level"/>
<reference key="1">
    <citation type="thesis" date="1994" institute="Robert Wood Johnson Medical School" country="United States">
        <authorList>
            <person name="Husak P.J."/>
        </authorList>
    </citation>
    <scope>NUCLEOTIDE SEQUENCE [GENOMIC RNA]</scope>
</reference>
<reference key="2">
    <citation type="journal article" date="2000" name="EMBO J.">
        <title>Influenza A virus NS2 protein mediates vRNP nuclear export through NES-independent interaction with hCRM1.</title>
        <authorList>
            <person name="Neumann G."/>
            <person name="Hughes M.T."/>
            <person name="Kawaoka Y."/>
        </authorList>
    </citation>
    <scope>INTERACTION WITH HUMAN XPO1</scope>
</reference>
<name>NEP_I33A0</name>
<organismHost>
    <name type="scientific">Aves</name>
    <dbReference type="NCBI Taxonomy" id="8782"/>
</organismHost>
<organismHost>
    <name type="scientific">Homo sapiens</name>
    <name type="common">Human</name>
    <dbReference type="NCBI Taxonomy" id="9606"/>
</organismHost>
<organismHost>
    <name type="scientific">Sus scrofa</name>
    <name type="common">Pig</name>
    <dbReference type="NCBI Taxonomy" id="9823"/>
</organismHost>
<feature type="chain" id="PRO_0000079014" description="Nuclear export protein">
    <location>
        <begin position="1"/>
        <end position="121"/>
    </location>
</feature>
<feature type="short sequence motif" description="Nuclear export signal" evidence="1">
    <location>
        <begin position="12"/>
        <end position="21"/>
    </location>
</feature>
<feature type="short sequence motif" description="Nuclear export signal" evidence="1">
    <location>
        <begin position="85"/>
        <end position="94"/>
    </location>
</feature>
<dbReference type="EMBL" id="U13682">
    <property type="protein sequence ID" value="AAA21581.1"/>
    <property type="molecule type" value="mRNA"/>
</dbReference>
<dbReference type="EMBL" id="U13683">
    <property type="protein sequence ID" value="AAA21583.1"/>
    <property type="molecule type" value="Genomic_RNA"/>
</dbReference>
<dbReference type="SMR" id="Q89733"/>
<dbReference type="Proteomes" id="UP000000834">
    <property type="component" value="Genome"/>
</dbReference>
<dbReference type="GO" id="GO:0042025">
    <property type="term" value="C:host cell nucleus"/>
    <property type="evidence" value="ECO:0007669"/>
    <property type="project" value="UniProtKB-SubCell"/>
</dbReference>
<dbReference type="GO" id="GO:0044423">
    <property type="term" value="C:virion component"/>
    <property type="evidence" value="ECO:0007669"/>
    <property type="project" value="UniProtKB-UniRule"/>
</dbReference>
<dbReference type="GO" id="GO:0039675">
    <property type="term" value="P:exit of virus from host cell nucleus through nuclear pore"/>
    <property type="evidence" value="ECO:0007669"/>
    <property type="project" value="UniProtKB-UniRule"/>
</dbReference>
<dbReference type="Gene3D" id="1.10.287.230">
    <property type="match status" value="1"/>
</dbReference>
<dbReference type="HAMAP" id="MF_04067">
    <property type="entry name" value="INFV_NEP"/>
    <property type="match status" value="1"/>
</dbReference>
<dbReference type="InterPro" id="IPR000968">
    <property type="entry name" value="Flu_NS2"/>
</dbReference>
<dbReference type="Pfam" id="PF00601">
    <property type="entry name" value="Flu_NS2"/>
    <property type="match status" value="1"/>
</dbReference>
<dbReference type="SUPFAM" id="SSF101156">
    <property type="entry name" value="Nonstructural protein ns2, Nep, M1-binding domain"/>
    <property type="match status" value="1"/>
</dbReference>
<accession>Q89733</accession>
<gene>
    <name evidence="1" type="primary">NS</name>
</gene>
<protein>
    <recommendedName>
        <fullName evidence="1">Nuclear export protein</fullName>
        <shortName evidence="1">NEP</shortName>
    </recommendedName>
    <alternativeName>
        <fullName evidence="1">Non-structural protein 2</fullName>
        <shortName evidence="1">NS2</shortName>
    </alternativeName>
</protein>
<sequence length="121" mass="14327">MDPNTVSSFQDILMRMSKMQLGSSSEDLNGIITQFESLKLYRDSLGEAVMRMGDLHSLQNRNGKWREQLGQKFEEIRWLIEEVRHRLKITENSFEQITFMQALQLLLEVEQEIRTFSFQLI</sequence>
<organism>
    <name type="scientific">Influenza A virus (strain A/Wilson-Smith/1933 H1N1)</name>
    <name type="common">Influenza A virus (strain A/WS/1933 H1N1)</name>
    <dbReference type="NCBI Taxonomy" id="381518"/>
    <lineage>
        <taxon>Viruses</taxon>
        <taxon>Riboviria</taxon>
        <taxon>Orthornavirae</taxon>
        <taxon>Negarnaviricota</taxon>
        <taxon>Polyploviricotina</taxon>
        <taxon>Insthoviricetes</taxon>
        <taxon>Articulavirales</taxon>
        <taxon>Orthomyxoviridae</taxon>
        <taxon>Alphainfluenzavirus</taxon>
        <taxon>Alphainfluenzavirus influenzae</taxon>
        <taxon>Influenza A virus</taxon>
    </lineage>
</organism>
<keyword id="KW-0025">Alternative splicing</keyword>
<keyword id="KW-1048">Host nucleus</keyword>
<keyword id="KW-0945">Host-virus interaction</keyword>
<keyword id="KW-0813">Transport</keyword>
<keyword id="KW-0946">Virion</keyword>